<name>CAIA_ECOLC</name>
<proteinExistence type="inferred from homology"/>
<keyword id="KW-0963">Cytoplasm</keyword>
<keyword id="KW-0274">FAD</keyword>
<keyword id="KW-0285">Flavoprotein</keyword>
<keyword id="KW-0560">Oxidoreductase</keyword>
<reference key="1">
    <citation type="submission" date="2008-02" db="EMBL/GenBank/DDBJ databases">
        <title>Complete sequence of Escherichia coli C str. ATCC 8739.</title>
        <authorList>
            <person name="Copeland A."/>
            <person name="Lucas S."/>
            <person name="Lapidus A."/>
            <person name="Glavina del Rio T."/>
            <person name="Dalin E."/>
            <person name="Tice H."/>
            <person name="Bruce D."/>
            <person name="Goodwin L."/>
            <person name="Pitluck S."/>
            <person name="Kiss H."/>
            <person name="Brettin T."/>
            <person name="Detter J.C."/>
            <person name="Han C."/>
            <person name="Kuske C.R."/>
            <person name="Schmutz J."/>
            <person name="Larimer F."/>
            <person name="Land M."/>
            <person name="Hauser L."/>
            <person name="Kyrpides N."/>
            <person name="Mikhailova N."/>
            <person name="Ingram L."/>
            <person name="Richardson P."/>
        </authorList>
    </citation>
    <scope>NUCLEOTIDE SEQUENCE [LARGE SCALE GENOMIC DNA]</scope>
    <source>
        <strain>ATCC 8739 / DSM 1576 / NBRC 3972 / NCIMB 8545 / WDCM 00012 / Crooks</strain>
    </source>
</reference>
<gene>
    <name evidence="1" type="primary">caiA</name>
    <name type="ordered locus">EcolC_3616</name>
</gene>
<dbReference type="EC" id="1.3.8.13" evidence="1"/>
<dbReference type="EMBL" id="CP000946">
    <property type="protein sequence ID" value="ACA79230.1"/>
    <property type="molecule type" value="Genomic_DNA"/>
</dbReference>
<dbReference type="RefSeq" id="WP_000347117.1">
    <property type="nucleotide sequence ID" value="NZ_MTFT01000035.1"/>
</dbReference>
<dbReference type="SMR" id="B1IRD7"/>
<dbReference type="GeneID" id="93777396"/>
<dbReference type="KEGG" id="ecl:EcolC_3616"/>
<dbReference type="HOGENOM" id="CLU_018204_0_2_6"/>
<dbReference type="UniPathway" id="UPA00117"/>
<dbReference type="GO" id="GO:0005737">
    <property type="term" value="C:cytoplasm"/>
    <property type="evidence" value="ECO:0007669"/>
    <property type="project" value="UniProtKB-SubCell"/>
</dbReference>
<dbReference type="GO" id="GO:0003995">
    <property type="term" value="F:acyl-CoA dehydrogenase activity"/>
    <property type="evidence" value="ECO:0007669"/>
    <property type="project" value="InterPro"/>
</dbReference>
<dbReference type="GO" id="GO:0050660">
    <property type="term" value="F:flavin adenine dinucleotide binding"/>
    <property type="evidence" value="ECO:0007669"/>
    <property type="project" value="InterPro"/>
</dbReference>
<dbReference type="GO" id="GO:0009437">
    <property type="term" value="P:carnitine metabolic process"/>
    <property type="evidence" value="ECO:0007669"/>
    <property type="project" value="UniProtKB-UniRule"/>
</dbReference>
<dbReference type="CDD" id="cd00567">
    <property type="entry name" value="ACAD"/>
    <property type="match status" value="1"/>
</dbReference>
<dbReference type="FunFam" id="1.20.140.10:FF:000001">
    <property type="entry name" value="Acyl-CoA dehydrogenase"/>
    <property type="match status" value="1"/>
</dbReference>
<dbReference type="FunFam" id="2.40.110.10:FF:000002">
    <property type="entry name" value="Acyl-CoA dehydrogenase fadE12"/>
    <property type="match status" value="1"/>
</dbReference>
<dbReference type="FunFam" id="1.10.540.10:FF:000005">
    <property type="entry name" value="Crotonobetainyl-CoA reductase"/>
    <property type="match status" value="1"/>
</dbReference>
<dbReference type="Gene3D" id="1.10.540.10">
    <property type="entry name" value="Acyl-CoA dehydrogenase/oxidase, N-terminal domain"/>
    <property type="match status" value="1"/>
</dbReference>
<dbReference type="Gene3D" id="2.40.110.10">
    <property type="entry name" value="Butyryl-CoA Dehydrogenase, subunit A, domain 2"/>
    <property type="match status" value="1"/>
</dbReference>
<dbReference type="Gene3D" id="1.20.140.10">
    <property type="entry name" value="Butyryl-CoA Dehydrogenase, subunit A, domain 3"/>
    <property type="match status" value="1"/>
</dbReference>
<dbReference type="HAMAP" id="MF_01052">
    <property type="entry name" value="CaiA"/>
    <property type="match status" value="1"/>
</dbReference>
<dbReference type="InterPro" id="IPR006089">
    <property type="entry name" value="Acyl-CoA_DH_CS"/>
</dbReference>
<dbReference type="InterPro" id="IPR006091">
    <property type="entry name" value="Acyl-CoA_Oxase/DH_mid-dom"/>
</dbReference>
<dbReference type="InterPro" id="IPR046373">
    <property type="entry name" value="Acyl-CoA_Oxase/DH_mid-dom_sf"/>
</dbReference>
<dbReference type="InterPro" id="IPR036250">
    <property type="entry name" value="AcylCo_DH-like_C"/>
</dbReference>
<dbReference type="InterPro" id="IPR009075">
    <property type="entry name" value="AcylCo_DH/oxidase_C"/>
</dbReference>
<dbReference type="InterPro" id="IPR013786">
    <property type="entry name" value="AcylCoA_DH/ox_N"/>
</dbReference>
<dbReference type="InterPro" id="IPR037069">
    <property type="entry name" value="AcylCoA_DH/ox_N_sf"/>
</dbReference>
<dbReference type="InterPro" id="IPR009100">
    <property type="entry name" value="AcylCoA_DH/oxidase_NM_dom_sf"/>
</dbReference>
<dbReference type="InterPro" id="IPR023450">
    <property type="entry name" value="CaiA"/>
</dbReference>
<dbReference type="NCBIfam" id="NF002885">
    <property type="entry name" value="PRK03354.1"/>
    <property type="match status" value="1"/>
</dbReference>
<dbReference type="PANTHER" id="PTHR43884">
    <property type="entry name" value="ACYL-COA DEHYDROGENASE"/>
    <property type="match status" value="1"/>
</dbReference>
<dbReference type="PANTHER" id="PTHR43884:SF12">
    <property type="entry name" value="ISOVALERYL-COA DEHYDROGENASE, MITOCHONDRIAL-RELATED"/>
    <property type="match status" value="1"/>
</dbReference>
<dbReference type="Pfam" id="PF00441">
    <property type="entry name" value="Acyl-CoA_dh_1"/>
    <property type="match status" value="1"/>
</dbReference>
<dbReference type="Pfam" id="PF02770">
    <property type="entry name" value="Acyl-CoA_dh_M"/>
    <property type="match status" value="1"/>
</dbReference>
<dbReference type="Pfam" id="PF02771">
    <property type="entry name" value="Acyl-CoA_dh_N"/>
    <property type="match status" value="1"/>
</dbReference>
<dbReference type="PIRSF" id="PIRSF016578">
    <property type="entry name" value="HsaA"/>
    <property type="match status" value="1"/>
</dbReference>
<dbReference type="SUPFAM" id="SSF47203">
    <property type="entry name" value="Acyl-CoA dehydrogenase C-terminal domain-like"/>
    <property type="match status" value="1"/>
</dbReference>
<dbReference type="SUPFAM" id="SSF56645">
    <property type="entry name" value="Acyl-CoA dehydrogenase NM domain-like"/>
    <property type="match status" value="1"/>
</dbReference>
<dbReference type="PROSITE" id="PS00072">
    <property type="entry name" value="ACYL_COA_DH_1"/>
    <property type="match status" value="1"/>
</dbReference>
<dbReference type="PROSITE" id="PS00073">
    <property type="entry name" value="ACYL_COA_DH_2"/>
    <property type="match status" value="1"/>
</dbReference>
<organism>
    <name type="scientific">Escherichia coli (strain ATCC 8739 / DSM 1576 / NBRC 3972 / NCIMB 8545 / WDCM 00012 / Crooks)</name>
    <dbReference type="NCBI Taxonomy" id="481805"/>
    <lineage>
        <taxon>Bacteria</taxon>
        <taxon>Pseudomonadati</taxon>
        <taxon>Pseudomonadota</taxon>
        <taxon>Gammaproteobacteria</taxon>
        <taxon>Enterobacterales</taxon>
        <taxon>Enterobacteriaceae</taxon>
        <taxon>Escherichia</taxon>
    </lineage>
</organism>
<sequence>MDFNLNDEQELFVAGIRELMASENWEAYFAECDRDSVYPERFVKALADMGIDSLLIPEEHGGLDAGFVTLAAVWMELGRLGAPTYVLYQLPGGFNTFLREGTQEQIDKIMAFRGTGKQMWNSAITEPGAGSDVGSLKTTYTRRNGKIYLNGSKCFITSSAYTPYIVVMARDGASPDKPVYTEWFVDMSKPGIKVTKLEKLGLRMDSCCEITFDDVELDEKDMFGREGNGFNRVKEEFDHERFLVALTNYGTAMCAFEDAARYANQRVQFGEAIGRFQLIQEKFAHMAIKLNSMKNMLYEAAWKADNGTITSGDAAMCKYFCANAAFEVVDSAMQVLGGVGIAGNHRISRFWRDLRVDRVSGGSDEMQILTLGRAVLKQYR</sequence>
<comment type="function">
    <text evidence="1">Catalyzes the reduction of crotonobetainyl-CoA to gamma-butyrobetainyl-CoA.</text>
</comment>
<comment type="catalytic activity">
    <reaction evidence="1">
        <text>4-(trimethylamino)butanoyl-CoA + oxidized [electron-transfer flavoprotein] + H(+) = crotonobetainyl-CoA + reduced [electron-transfer flavoprotein]</text>
        <dbReference type="Rhea" id="RHEA:51584"/>
        <dbReference type="Rhea" id="RHEA-COMP:10685"/>
        <dbReference type="Rhea" id="RHEA-COMP:10686"/>
        <dbReference type="ChEBI" id="CHEBI:15378"/>
        <dbReference type="ChEBI" id="CHEBI:57692"/>
        <dbReference type="ChEBI" id="CHEBI:58307"/>
        <dbReference type="ChEBI" id="CHEBI:60933"/>
        <dbReference type="ChEBI" id="CHEBI:61513"/>
        <dbReference type="EC" id="1.3.8.13"/>
    </reaction>
</comment>
<comment type="cofactor">
    <cofactor evidence="1">
        <name>FAD</name>
        <dbReference type="ChEBI" id="CHEBI:57692"/>
    </cofactor>
</comment>
<comment type="pathway">
    <text evidence="1">Amine and polyamine metabolism; carnitine metabolism.</text>
</comment>
<comment type="subunit">
    <text evidence="1">Homotetramer.</text>
</comment>
<comment type="subcellular location">
    <subcellularLocation>
        <location evidence="1">Cytoplasm</location>
    </subcellularLocation>
</comment>
<comment type="similarity">
    <text evidence="1">Belongs to the acyl-CoA dehydrogenase family.</text>
</comment>
<accession>B1IRD7</accession>
<protein>
    <recommendedName>
        <fullName evidence="1">Crotonobetainyl-CoA reductase</fullName>
        <ecNumber evidence="1">1.3.8.13</ecNumber>
    </recommendedName>
    <alternativeName>
        <fullName evidence="1">Crotonobetainyl-CoA dehydrogenase</fullName>
    </alternativeName>
</protein>
<feature type="chain" id="PRO_1000084428" description="Crotonobetainyl-CoA reductase">
    <location>
        <begin position="1"/>
        <end position="380"/>
    </location>
</feature>
<evidence type="ECO:0000255" key="1">
    <source>
        <dbReference type="HAMAP-Rule" id="MF_01052"/>
    </source>
</evidence>